<proteinExistence type="inferred from homology"/>
<keyword id="KW-0067">ATP-binding</keyword>
<keyword id="KW-0436">Ligase</keyword>
<keyword id="KW-0547">Nucleotide-binding</keyword>
<keyword id="KW-0648">Protein biosynthesis</keyword>
<dbReference type="EC" id="6.3.5.-" evidence="1"/>
<dbReference type="EMBL" id="AM747720">
    <property type="protein sequence ID" value="CAR50794.1"/>
    <property type="molecule type" value="Genomic_DNA"/>
</dbReference>
<dbReference type="RefSeq" id="WP_006485929.1">
    <property type="nucleotide sequence ID" value="NC_011000.1"/>
</dbReference>
<dbReference type="SMR" id="B4E7X5"/>
<dbReference type="KEGG" id="bcj:BCAL0483"/>
<dbReference type="eggNOG" id="COG0721">
    <property type="taxonomic scope" value="Bacteria"/>
</dbReference>
<dbReference type="HOGENOM" id="CLU_105899_2_2_4"/>
<dbReference type="BioCyc" id="BCEN216591:G1G1V-551-MONOMER"/>
<dbReference type="Proteomes" id="UP000001035">
    <property type="component" value="Chromosome 1"/>
</dbReference>
<dbReference type="GO" id="GO:0050566">
    <property type="term" value="F:asparaginyl-tRNA synthase (glutamine-hydrolyzing) activity"/>
    <property type="evidence" value="ECO:0007669"/>
    <property type="project" value="RHEA"/>
</dbReference>
<dbReference type="GO" id="GO:0005524">
    <property type="term" value="F:ATP binding"/>
    <property type="evidence" value="ECO:0007669"/>
    <property type="project" value="UniProtKB-KW"/>
</dbReference>
<dbReference type="GO" id="GO:0050567">
    <property type="term" value="F:glutaminyl-tRNA synthase (glutamine-hydrolyzing) activity"/>
    <property type="evidence" value="ECO:0007669"/>
    <property type="project" value="UniProtKB-UniRule"/>
</dbReference>
<dbReference type="GO" id="GO:0070681">
    <property type="term" value="P:glutaminyl-tRNAGln biosynthesis via transamidation"/>
    <property type="evidence" value="ECO:0007669"/>
    <property type="project" value="TreeGrafter"/>
</dbReference>
<dbReference type="GO" id="GO:0006450">
    <property type="term" value="P:regulation of translational fidelity"/>
    <property type="evidence" value="ECO:0007669"/>
    <property type="project" value="InterPro"/>
</dbReference>
<dbReference type="GO" id="GO:0006412">
    <property type="term" value="P:translation"/>
    <property type="evidence" value="ECO:0007669"/>
    <property type="project" value="UniProtKB-UniRule"/>
</dbReference>
<dbReference type="Gene3D" id="1.10.20.60">
    <property type="entry name" value="Glu-tRNAGln amidotransferase C subunit, N-terminal domain"/>
    <property type="match status" value="1"/>
</dbReference>
<dbReference type="HAMAP" id="MF_00122">
    <property type="entry name" value="GatC"/>
    <property type="match status" value="1"/>
</dbReference>
<dbReference type="InterPro" id="IPR036113">
    <property type="entry name" value="Asp/Glu-ADT_sf_sub_c"/>
</dbReference>
<dbReference type="InterPro" id="IPR003837">
    <property type="entry name" value="GatC"/>
</dbReference>
<dbReference type="NCBIfam" id="TIGR00135">
    <property type="entry name" value="gatC"/>
    <property type="match status" value="1"/>
</dbReference>
<dbReference type="PANTHER" id="PTHR15004">
    <property type="entry name" value="GLUTAMYL-TRNA(GLN) AMIDOTRANSFERASE SUBUNIT C, MITOCHONDRIAL"/>
    <property type="match status" value="1"/>
</dbReference>
<dbReference type="PANTHER" id="PTHR15004:SF0">
    <property type="entry name" value="GLUTAMYL-TRNA(GLN) AMIDOTRANSFERASE SUBUNIT C, MITOCHONDRIAL"/>
    <property type="match status" value="1"/>
</dbReference>
<dbReference type="Pfam" id="PF02686">
    <property type="entry name" value="GatC"/>
    <property type="match status" value="1"/>
</dbReference>
<dbReference type="SUPFAM" id="SSF141000">
    <property type="entry name" value="Glu-tRNAGln amidotransferase C subunit"/>
    <property type="match status" value="1"/>
</dbReference>
<sequence length="99" mass="10957">MALTLTDVKRIAHLARLEMADADAEHMLGQLNEFFGLVEQMQAVDTAGIAPLAHPIEQIQEVAQRLRDDAVTEVVDRDDNQRPAPAVQDGLYLVPKVIE</sequence>
<comment type="function">
    <text evidence="1">Allows the formation of correctly charged Asn-tRNA(Asn) or Gln-tRNA(Gln) through the transamidation of misacylated Asp-tRNA(Asn) or Glu-tRNA(Gln) in organisms which lack either or both of asparaginyl-tRNA or glutaminyl-tRNA synthetases. The reaction takes place in the presence of glutamine and ATP through an activated phospho-Asp-tRNA(Asn) or phospho-Glu-tRNA(Gln).</text>
</comment>
<comment type="catalytic activity">
    <reaction evidence="1">
        <text>L-glutamyl-tRNA(Gln) + L-glutamine + ATP + H2O = L-glutaminyl-tRNA(Gln) + L-glutamate + ADP + phosphate + H(+)</text>
        <dbReference type="Rhea" id="RHEA:17521"/>
        <dbReference type="Rhea" id="RHEA-COMP:9681"/>
        <dbReference type="Rhea" id="RHEA-COMP:9684"/>
        <dbReference type="ChEBI" id="CHEBI:15377"/>
        <dbReference type="ChEBI" id="CHEBI:15378"/>
        <dbReference type="ChEBI" id="CHEBI:29985"/>
        <dbReference type="ChEBI" id="CHEBI:30616"/>
        <dbReference type="ChEBI" id="CHEBI:43474"/>
        <dbReference type="ChEBI" id="CHEBI:58359"/>
        <dbReference type="ChEBI" id="CHEBI:78520"/>
        <dbReference type="ChEBI" id="CHEBI:78521"/>
        <dbReference type="ChEBI" id="CHEBI:456216"/>
    </reaction>
</comment>
<comment type="catalytic activity">
    <reaction evidence="1">
        <text>L-aspartyl-tRNA(Asn) + L-glutamine + ATP + H2O = L-asparaginyl-tRNA(Asn) + L-glutamate + ADP + phosphate + 2 H(+)</text>
        <dbReference type="Rhea" id="RHEA:14513"/>
        <dbReference type="Rhea" id="RHEA-COMP:9674"/>
        <dbReference type="Rhea" id="RHEA-COMP:9677"/>
        <dbReference type="ChEBI" id="CHEBI:15377"/>
        <dbReference type="ChEBI" id="CHEBI:15378"/>
        <dbReference type="ChEBI" id="CHEBI:29985"/>
        <dbReference type="ChEBI" id="CHEBI:30616"/>
        <dbReference type="ChEBI" id="CHEBI:43474"/>
        <dbReference type="ChEBI" id="CHEBI:58359"/>
        <dbReference type="ChEBI" id="CHEBI:78515"/>
        <dbReference type="ChEBI" id="CHEBI:78516"/>
        <dbReference type="ChEBI" id="CHEBI:456216"/>
    </reaction>
</comment>
<comment type="subunit">
    <text evidence="1">Heterotrimer of A, B and C subunits.</text>
</comment>
<comment type="similarity">
    <text evidence="1">Belongs to the GatC family.</text>
</comment>
<organism>
    <name type="scientific">Burkholderia cenocepacia (strain ATCC BAA-245 / DSM 16553 / LMG 16656 / NCTC 13227 / J2315 / CF5610)</name>
    <name type="common">Burkholderia cepacia (strain J2315)</name>
    <dbReference type="NCBI Taxonomy" id="216591"/>
    <lineage>
        <taxon>Bacteria</taxon>
        <taxon>Pseudomonadati</taxon>
        <taxon>Pseudomonadota</taxon>
        <taxon>Betaproteobacteria</taxon>
        <taxon>Burkholderiales</taxon>
        <taxon>Burkholderiaceae</taxon>
        <taxon>Burkholderia</taxon>
        <taxon>Burkholderia cepacia complex</taxon>
    </lineage>
</organism>
<accession>B4E7X5</accession>
<reference key="1">
    <citation type="journal article" date="2009" name="J. Bacteriol.">
        <title>The genome of Burkholderia cenocepacia J2315, an epidemic pathogen of cystic fibrosis patients.</title>
        <authorList>
            <person name="Holden M.T."/>
            <person name="Seth-Smith H.M."/>
            <person name="Crossman L.C."/>
            <person name="Sebaihia M."/>
            <person name="Bentley S.D."/>
            <person name="Cerdeno-Tarraga A.M."/>
            <person name="Thomson N.R."/>
            <person name="Bason N."/>
            <person name="Quail M.A."/>
            <person name="Sharp S."/>
            <person name="Cherevach I."/>
            <person name="Churcher C."/>
            <person name="Goodhead I."/>
            <person name="Hauser H."/>
            <person name="Holroyd N."/>
            <person name="Mungall K."/>
            <person name="Scott P."/>
            <person name="Walker D."/>
            <person name="White B."/>
            <person name="Rose H."/>
            <person name="Iversen P."/>
            <person name="Mil-Homens D."/>
            <person name="Rocha E.P."/>
            <person name="Fialho A.M."/>
            <person name="Baldwin A."/>
            <person name="Dowson C."/>
            <person name="Barrell B.G."/>
            <person name="Govan J.R."/>
            <person name="Vandamme P."/>
            <person name="Hart C.A."/>
            <person name="Mahenthiralingam E."/>
            <person name="Parkhill J."/>
        </authorList>
    </citation>
    <scope>NUCLEOTIDE SEQUENCE [LARGE SCALE GENOMIC DNA]</scope>
    <source>
        <strain>ATCC BAA-245 / DSM 16553 / LMG 16656 / NCTC 13227 / J2315 / CF5610</strain>
    </source>
</reference>
<protein>
    <recommendedName>
        <fullName evidence="1">Aspartyl/glutamyl-tRNA(Asn/Gln) amidotransferase subunit C</fullName>
        <shortName evidence="1">Asp/Glu-ADT subunit C</shortName>
        <ecNumber evidence="1">6.3.5.-</ecNumber>
    </recommendedName>
</protein>
<evidence type="ECO:0000255" key="1">
    <source>
        <dbReference type="HAMAP-Rule" id="MF_00122"/>
    </source>
</evidence>
<feature type="chain" id="PRO_1000095266" description="Aspartyl/glutamyl-tRNA(Asn/Gln) amidotransferase subunit C">
    <location>
        <begin position="1"/>
        <end position="99"/>
    </location>
</feature>
<name>GATC_BURCJ</name>
<gene>
    <name evidence="1" type="primary">gatC</name>
    <name type="ordered locus">BceJ2315_04810</name>
    <name type="ORF">BCAL0483</name>
</gene>